<comment type="function">
    <text evidence="5 7">Involved in copper homeostasis. Can complement the yeast mutants atx1 and sod1.</text>
</comment>
<comment type="cofactor">
    <cofactor evidence="1">
        <name>Cu cation</name>
        <dbReference type="ChEBI" id="CHEBI:23378"/>
    </cofactor>
    <text evidence="1">Binds 1 copper ion per subunit.</text>
</comment>
<comment type="tissue specificity">
    <text evidence="4">Expressed in phloem (at protein level).</text>
</comment>
<comment type="induction">
    <text evidence="4 6 7">Induced by copper deficiency, ozone and senescence. Down-regulated by excess of copper.</text>
</comment>
<comment type="disruption phenotype">
    <text evidence="6">No visible phenotype under normal growth conditions.</text>
</comment>
<comment type="similarity">
    <text evidence="8">Belongs to the ATX1 family.</text>
</comment>
<reference key="1">
    <citation type="journal article" date="1998" name="Plant Physiol.">
        <title>Identification of a functional homolog of the yeast copper homeostasis gene ATX1 from Arabidopsis.</title>
        <authorList>
            <person name="Himelblau E."/>
            <person name="Mira H."/>
            <person name="Lin S.J."/>
            <person name="Cizewski Culotta V."/>
            <person name="Penarrubia L."/>
            <person name="Amasino R.M."/>
        </authorList>
    </citation>
    <scope>NUCLEOTIDE SEQUENCE [MRNA]</scope>
    <scope>FUNCTION</scope>
    <scope>INDUCTION BY SENESCENCE</scope>
</reference>
<reference key="2">
    <citation type="journal article" date="2000" name="Nature">
        <title>Sequence and analysis of chromosome 3 of the plant Arabidopsis thaliana.</title>
        <authorList>
            <person name="Salanoubat M."/>
            <person name="Lemcke K."/>
            <person name="Rieger M."/>
            <person name="Ansorge W."/>
            <person name="Unseld M."/>
            <person name="Fartmann B."/>
            <person name="Valle G."/>
            <person name="Bloecker H."/>
            <person name="Perez-Alonso M."/>
            <person name="Obermaier B."/>
            <person name="Delseny M."/>
            <person name="Boutry M."/>
            <person name="Grivell L.A."/>
            <person name="Mache R."/>
            <person name="Puigdomenech P."/>
            <person name="De Simone V."/>
            <person name="Choisne N."/>
            <person name="Artiguenave F."/>
            <person name="Robert C."/>
            <person name="Brottier P."/>
            <person name="Wincker P."/>
            <person name="Cattolico L."/>
            <person name="Weissenbach J."/>
            <person name="Saurin W."/>
            <person name="Quetier F."/>
            <person name="Schaefer M."/>
            <person name="Mueller-Auer S."/>
            <person name="Gabel C."/>
            <person name="Fuchs M."/>
            <person name="Benes V."/>
            <person name="Wurmbach E."/>
            <person name="Drzonek H."/>
            <person name="Erfle H."/>
            <person name="Jordan N."/>
            <person name="Bangert S."/>
            <person name="Wiedelmann R."/>
            <person name="Kranz H."/>
            <person name="Voss H."/>
            <person name="Holland R."/>
            <person name="Brandt P."/>
            <person name="Nyakatura G."/>
            <person name="Vezzi A."/>
            <person name="D'Angelo M."/>
            <person name="Pallavicini A."/>
            <person name="Toppo S."/>
            <person name="Simionati B."/>
            <person name="Conrad A."/>
            <person name="Hornischer K."/>
            <person name="Kauer G."/>
            <person name="Loehnert T.-H."/>
            <person name="Nordsiek G."/>
            <person name="Reichelt J."/>
            <person name="Scharfe M."/>
            <person name="Schoen O."/>
            <person name="Bargues M."/>
            <person name="Terol J."/>
            <person name="Climent J."/>
            <person name="Navarro P."/>
            <person name="Collado C."/>
            <person name="Perez-Perez A."/>
            <person name="Ottenwaelder B."/>
            <person name="Duchemin D."/>
            <person name="Cooke R."/>
            <person name="Laudie M."/>
            <person name="Berger-Llauro C."/>
            <person name="Purnelle B."/>
            <person name="Masuy D."/>
            <person name="de Haan M."/>
            <person name="Maarse A.C."/>
            <person name="Alcaraz J.-P."/>
            <person name="Cottet A."/>
            <person name="Casacuberta E."/>
            <person name="Monfort A."/>
            <person name="Argiriou A."/>
            <person name="Flores M."/>
            <person name="Liguori R."/>
            <person name="Vitale D."/>
            <person name="Mannhaupt G."/>
            <person name="Haase D."/>
            <person name="Schoof H."/>
            <person name="Rudd S."/>
            <person name="Zaccaria P."/>
            <person name="Mewes H.-W."/>
            <person name="Mayer K.F.X."/>
            <person name="Kaul S."/>
            <person name="Town C.D."/>
            <person name="Koo H.L."/>
            <person name="Tallon L.J."/>
            <person name="Jenkins J."/>
            <person name="Rooney T."/>
            <person name="Rizzo M."/>
            <person name="Walts A."/>
            <person name="Utterback T."/>
            <person name="Fujii C.Y."/>
            <person name="Shea T.P."/>
            <person name="Creasy T.H."/>
            <person name="Haas B."/>
            <person name="Maiti R."/>
            <person name="Wu D."/>
            <person name="Peterson J."/>
            <person name="Van Aken S."/>
            <person name="Pai G."/>
            <person name="Militscher J."/>
            <person name="Sellers P."/>
            <person name="Gill J.E."/>
            <person name="Feldblyum T.V."/>
            <person name="Preuss D."/>
            <person name="Lin X."/>
            <person name="Nierman W.C."/>
            <person name="Salzberg S.L."/>
            <person name="White O."/>
            <person name="Venter J.C."/>
            <person name="Fraser C.M."/>
            <person name="Kaneko T."/>
            <person name="Nakamura Y."/>
            <person name="Sato S."/>
            <person name="Kato T."/>
            <person name="Asamizu E."/>
            <person name="Sasamoto S."/>
            <person name="Kimura T."/>
            <person name="Idesawa K."/>
            <person name="Kawashima K."/>
            <person name="Kishida Y."/>
            <person name="Kiyokawa C."/>
            <person name="Kohara M."/>
            <person name="Matsumoto M."/>
            <person name="Matsuno A."/>
            <person name="Muraki A."/>
            <person name="Nakayama S."/>
            <person name="Nakazaki N."/>
            <person name="Shinpo S."/>
            <person name="Takeuchi C."/>
            <person name="Wada T."/>
            <person name="Watanabe A."/>
            <person name="Yamada M."/>
            <person name="Yasuda M."/>
            <person name="Tabata S."/>
        </authorList>
    </citation>
    <scope>NUCLEOTIDE SEQUENCE [LARGE SCALE GENOMIC DNA]</scope>
    <source>
        <strain>cv. Columbia</strain>
    </source>
</reference>
<reference key="3">
    <citation type="journal article" date="2017" name="Plant J.">
        <title>Araport11: a complete reannotation of the Arabidopsis thaliana reference genome.</title>
        <authorList>
            <person name="Cheng C.Y."/>
            <person name="Krishnakumar V."/>
            <person name="Chan A.P."/>
            <person name="Thibaud-Nissen F."/>
            <person name="Schobel S."/>
            <person name="Town C.D."/>
        </authorList>
    </citation>
    <scope>GENOME REANNOTATION</scope>
    <source>
        <strain>cv. Columbia</strain>
    </source>
</reference>
<reference key="4">
    <citation type="journal article" date="2003" name="Science">
        <title>Empirical analysis of transcriptional activity in the Arabidopsis genome.</title>
        <authorList>
            <person name="Yamada K."/>
            <person name="Lim J."/>
            <person name="Dale J.M."/>
            <person name="Chen H."/>
            <person name="Shinn P."/>
            <person name="Palm C.J."/>
            <person name="Southwick A.M."/>
            <person name="Wu H.C."/>
            <person name="Kim C.J."/>
            <person name="Nguyen M."/>
            <person name="Pham P.K."/>
            <person name="Cheuk R.F."/>
            <person name="Karlin-Newmann G."/>
            <person name="Liu S.X."/>
            <person name="Lam B."/>
            <person name="Sakano H."/>
            <person name="Wu T."/>
            <person name="Yu G."/>
            <person name="Miranda M."/>
            <person name="Quach H.L."/>
            <person name="Tripp M."/>
            <person name="Chang C.H."/>
            <person name="Lee J.M."/>
            <person name="Toriumi M.J."/>
            <person name="Chan M.M."/>
            <person name="Tang C.C."/>
            <person name="Onodera C.S."/>
            <person name="Deng J.M."/>
            <person name="Akiyama K."/>
            <person name="Ansari Y."/>
            <person name="Arakawa T."/>
            <person name="Banh J."/>
            <person name="Banno F."/>
            <person name="Bowser L."/>
            <person name="Brooks S.Y."/>
            <person name="Carninci P."/>
            <person name="Chao Q."/>
            <person name="Choy N."/>
            <person name="Enju A."/>
            <person name="Goldsmith A.D."/>
            <person name="Gurjal M."/>
            <person name="Hansen N.F."/>
            <person name="Hayashizaki Y."/>
            <person name="Johnson-Hopson C."/>
            <person name="Hsuan V.W."/>
            <person name="Iida K."/>
            <person name="Karnes M."/>
            <person name="Khan S."/>
            <person name="Koesema E."/>
            <person name="Ishida J."/>
            <person name="Jiang P.X."/>
            <person name="Jones T."/>
            <person name="Kawai J."/>
            <person name="Kamiya A."/>
            <person name="Meyers C."/>
            <person name="Nakajima M."/>
            <person name="Narusaka M."/>
            <person name="Seki M."/>
            <person name="Sakurai T."/>
            <person name="Satou M."/>
            <person name="Tamse R."/>
            <person name="Vaysberg M."/>
            <person name="Wallender E.K."/>
            <person name="Wong C."/>
            <person name="Yamamura Y."/>
            <person name="Yuan S."/>
            <person name="Shinozaki K."/>
            <person name="Davis R.W."/>
            <person name="Theologis A."/>
            <person name="Ecker J.R."/>
        </authorList>
    </citation>
    <scope>NUCLEOTIDE SEQUENCE [LARGE SCALE MRNA]</scope>
    <source>
        <strain>cv. Columbia</strain>
    </source>
</reference>
<reference key="5">
    <citation type="journal article" date="2001" name="Biochem. J.">
        <title>Functional and conformational properties of the exclusive C-domain from the Arabidopsis copper chaperone (CCH).</title>
        <authorList>
            <person name="Mira H."/>
            <person name="Vilar M."/>
            <person name="Perez-Paya E."/>
            <person name="Penarrubia L."/>
        </authorList>
    </citation>
    <scope>FUNCTION</scope>
</reference>
<reference key="6">
    <citation type="journal article" date="2001" name="Plant J.">
        <title>Evidence for the plant-specific intercellular transport of the Arabidopsis copper chaperone CCH.</title>
        <authorList>
            <person name="Mira H."/>
            <person name="Martinez-Garcia F."/>
            <person name="Penarrubia L."/>
        </authorList>
    </citation>
    <scope>TISSUE SPECIFICITY</scope>
    <scope>INDUCTION</scope>
</reference>
<reference key="7">
    <citation type="journal article" date="2012" name="Mol. Cell. Proteomics">
        <title>Comparative large-scale characterisation of plant vs. mammal proteins reveals similar and idiosyncratic N-alpha acetylation features.</title>
        <authorList>
            <person name="Bienvenut W.V."/>
            <person name="Sumpton D."/>
            <person name="Martinez A."/>
            <person name="Lilla S."/>
            <person name="Espagne C."/>
            <person name="Meinnel T."/>
            <person name="Giglione C."/>
        </authorList>
    </citation>
    <scope>ACETYLATION [LARGE SCALE ANALYSIS] AT ALA-2</scope>
    <scope>CLEAVAGE OF INITIATOR METHIONINE [LARGE SCALE ANALYSIS]</scope>
    <scope>IDENTIFICATION BY MASS SPECTROMETRY [LARGE SCALE ANALYSIS]</scope>
</reference>
<reference key="8">
    <citation type="journal article" date="2012" name="Plant Physiol.">
        <title>Copper chaperone antioxidant protein1 is essential for copper homeostasis.</title>
        <authorList>
            <person name="Shin L.J."/>
            <person name="Lo J.C."/>
            <person name="Yeh K.C."/>
        </authorList>
    </citation>
    <scope>INDUCTION</scope>
    <scope>DISRUPTION PHENOTYPE</scope>
</reference>
<accession>O82089</accession>
<name>CCH_ARATH</name>
<proteinExistence type="evidence at protein level"/>
<dbReference type="EMBL" id="U88711">
    <property type="protein sequence ID" value="AAC33510.1"/>
    <property type="molecule type" value="mRNA"/>
</dbReference>
<dbReference type="EMBL" id="AL163763">
    <property type="protein sequence ID" value="CAB87423.1"/>
    <property type="molecule type" value="Genomic_DNA"/>
</dbReference>
<dbReference type="EMBL" id="CP002686">
    <property type="protein sequence ID" value="AEE79500.1"/>
    <property type="molecule type" value="Genomic_DNA"/>
</dbReference>
<dbReference type="EMBL" id="CP002686">
    <property type="protein sequence ID" value="ANM64077.1"/>
    <property type="molecule type" value="Genomic_DNA"/>
</dbReference>
<dbReference type="EMBL" id="AF361860">
    <property type="protein sequence ID" value="AAK32872.1"/>
    <property type="molecule type" value="mRNA"/>
</dbReference>
<dbReference type="EMBL" id="AY066056">
    <property type="protein sequence ID" value="AAL47423.1"/>
    <property type="molecule type" value="mRNA"/>
</dbReference>
<dbReference type="EMBL" id="AY085657">
    <property type="protein sequence ID" value="AAM62878.1"/>
    <property type="molecule type" value="mRNA"/>
</dbReference>
<dbReference type="PIR" id="T47741">
    <property type="entry name" value="T47741"/>
</dbReference>
<dbReference type="RefSeq" id="NP_001326128.1">
    <property type="nucleotide sequence ID" value="NM_001339780.1"/>
</dbReference>
<dbReference type="RefSeq" id="NP_191183.1">
    <property type="nucleotide sequence ID" value="NM_115482.4"/>
</dbReference>
<dbReference type="SMR" id="O82089"/>
<dbReference type="BioGRID" id="10106">
    <property type="interactions" value="2"/>
</dbReference>
<dbReference type="FunCoup" id="O82089">
    <property type="interactions" value="2746"/>
</dbReference>
<dbReference type="IntAct" id="O82089">
    <property type="interactions" value="1"/>
</dbReference>
<dbReference type="STRING" id="3702.O82089"/>
<dbReference type="TCDB" id="9.B.462.1.4">
    <property type="family name" value="the atx1 copper ion chaparone or transport protein (atx1) family"/>
</dbReference>
<dbReference type="iPTMnet" id="O82089"/>
<dbReference type="PaxDb" id="3702-AT3G56240.1"/>
<dbReference type="ProteomicsDB" id="223917"/>
<dbReference type="EnsemblPlants" id="AT3G56240.1">
    <property type="protein sequence ID" value="AT3G56240.1"/>
    <property type="gene ID" value="AT3G56240"/>
</dbReference>
<dbReference type="EnsemblPlants" id="AT3G56240.3">
    <property type="protein sequence ID" value="AT3G56240.3"/>
    <property type="gene ID" value="AT3G56240"/>
</dbReference>
<dbReference type="GeneID" id="824790"/>
<dbReference type="Gramene" id="AT3G56240.1">
    <property type="protein sequence ID" value="AT3G56240.1"/>
    <property type="gene ID" value="AT3G56240"/>
</dbReference>
<dbReference type="Gramene" id="AT3G56240.3">
    <property type="protein sequence ID" value="AT3G56240.3"/>
    <property type="gene ID" value="AT3G56240"/>
</dbReference>
<dbReference type="KEGG" id="ath:AT3G56240"/>
<dbReference type="Araport" id="AT3G56240"/>
<dbReference type="TAIR" id="AT3G56240">
    <property type="gene designation" value="CCH"/>
</dbReference>
<dbReference type="eggNOG" id="KOG1603">
    <property type="taxonomic scope" value="Eukaryota"/>
</dbReference>
<dbReference type="HOGENOM" id="CLU_134973_3_0_1"/>
<dbReference type="InParanoid" id="O82089"/>
<dbReference type="OMA" id="MYYQYMQ"/>
<dbReference type="OrthoDB" id="689350at2759"/>
<dbReference type="PhylomeDB" id="O82089"/>
<dbReference type="CD-CODE" id="4299E36E">
    <property type="entry name" value="Nucleolus"/>
</dbReference>
<dbReference type="PRO" id="PR:O82089"/>
<dbReference type="Proteomes" id="UP000006548">
    <property type="component" value="Chromosome 3"/>
</dbReference>
<dbReference type="ExpressionAtlas" id="O82089">
    <property type="expression patterns" value="baseline and differential"/>
</dbReference>
<dbReference type="GO" id="GO:0009507">
    <property type="term" value="C:chloroplast"/>
    <property type="evidence" value="ECO:0007005"/>
    <property type="project" value="TAIR"/>
</dbReference>
<dbReference type="GO" id="GO:0005829">
    <property type="term" value="C:cytosol"/>
    <property type="evidence" value="ECO:0007005"/>
    <property type="project" value="TAIR"/>
</dbReference>
<dbReference type="GO" id="GO:0016531">
    <property type="term" value="F:copper chaperone activity"/>
    <property type="evidence" value="ECO:0000250"/>
    <property type="project" value="TAIR"/>
</dbReference>
<dbReference type="GO" id="GO:0046872">
    <property type="term" value="F:metal ion binding"/>
    <property type="evidence" value="ECO:0007669"/>
    <property type="project" value="UniProtKB-KW"/>
</dbReference>
<dbReference type="GO" id="GO:0019904">
    <property type="term" value="F:protein domain specific binding"/>
    <property type="evidence" value="ECO:0000353"/>
    <property type="project" value="CAFA"/>
</dbReference>
<dbReference type="GO" id="GO:0006825">
    <property type="term" value="P:copper ion transport"/>
    <property type="evidence" value="ECO:0007669"/>
    <property type="project" value="UniProtKB-KW"/>
</dbReference>
<dbReference type="GO" id="GO:0006878">
    <property type="term" value="P:intracellular copper ion homeostasis"/>
    <property type="evidence" value="ECO:0000315"/>
    <property type="project" value="TAIR"/>
</dbReference>
<dbReference type="GO" id="GO:0046686">
    <property type="term" value="P:response to cadmium ion"/>
    <property type="evidence" value="ECO:0000270"/>
    <property type="project" value="TAIR"/>
</dbReference>
<dbReference type="CDD" id="cd00371">
    <property type="entry name" value="HMA"/>
    <property type="match status" value="1"/>
</dbReference>
<dbReference type="FunFam" id="3.30.70.100:FF:000008">
    <property type="entry name" value="Copper transport protein ATOX1"/>
    <property type="match status" value="1"/>
</dbReference>
<dbReference type="Gene3D" id="3.30.70.100">
    <property type="match status" value="1"/>
</dbReference>
<dbReference type="InterPro" id="IPR006121">
    <property type="entry name" value="HMA_dom"/>
</dbReference>
<dbReference type="InterPro" id="IPR036163">
    <property type="entry name" value="HMA_dom_sf"/>
</dbReference>
<dbReference type="PANTHER" id="PTHR22814">
    <property type="entry name" value="COPPER TRANSPORT PROTEIN ATOX1-RELATED"/>
    <property type="match status" value="1"/>
</dbReference>
<dbReference type="PANTHER" id="PTHR22814:SF310">
    <property type="entry name" value="COPPER TRANSPORT PROTEIN CCH"/>
    <property type="match status" value="1"/>
</dbReference>
<dbReference type="Pfam" id="PF00403">
    <property type="entry name" value="HMA"/>
    <property type="match status" value="1"/>
</dbReference>
<dbReference type="SUPFAM" id="SSF55008">
    <property type="entry name" value="HMA, heavy metal-associated domain"/>
    <property type="match status" value="1"/>
</dbReference>
<dbReference type="PROSITE" id="PS50846">
    <property type="entry name" value="HMA_2"/>
    <property type="match status" value="1"/>
</dbReference>
<protein>
    <recommendedName>
        <fullName>Copper transport protein CCH</fullName>
    </recommendedName>
    <alternativeName>
        <fullName>Copper chaperone CCH</fullName>
    </alternativeName>
</protein>
<organism>
    <name type="scientific">Arabidopsis thaliana</name>
    <name type="common">Mouse-ear cress</name>
    <dbReference type="NCBI Taxonomy" id="3702"/>
    <lineage>
        <taxon>Eukaryota</taxon>
        <taxon>Viridiplantae</taxon>
        <taxon>Streptophyta</taxon>
        <taxon>Embryophyta</taxon>
        <taxon>Tracheophyta</taxon>
        <taxon>Spermatophyta</taxon>
        <taxon>Magnoliopsida</taxon>
        <taxon>eudicotyledons</taxon>
        <taxon>Gunneridae</taxon>
        <taxon>Pentapetalae</taxon>
        <taxon>rosids</taxon>
        <taxon>malvids</taxon>
        <taxon>Brassicales</taxon>
        <taxon>Brassicaceae</taxon>
        <taxon>Camelineae</taxon>
        <taxon>Arabidopsis</taxon>
    </lineage>
</organism>
<sequence>MAQTVVLKVGMSCQGCVGAVNRVLGKMEGVESFDIDIKEQKVTVKGNVEPEAVFQTVSKTGKKTSYWPVEAEAEPKAEADPKVETVTETKTEAETKTEAKVDAKADVEPKAAEAETKPSQV</sequence>
<gene>
    <name type="primary">CCH</name>
    <name type="ordered locus">At3g56240</name>
    <name type="ORF">F18O21.200</name>
</gene>
<evidence type="ECO:0000250" key="1"/>
<evidence type="ECO:0000255" key="2">
    <source>
        <dbReference type="PROSITE-ProRule" id="PRU00280"/>
    </source>
</evidence>
<evidence type="ECO:0000256" key="3">
    <source>
        <dbReference type="SAM" id="MobiDB-lite"/>
    </source>
</evidence>
<evidence type="ECO:0000269" key="4">
    <source>
    </source>
</evidence>
<evidence type="ECO:0000269" key="5">
    <source>
    </source>
</evidence>
<evidence type="ECO:0000269" key="6">
    <source>
    </source>
</evidence>
<evidence type="ECO:0000269" key="7">
    <source>
    </source>
</evidence>
<evidence type="ECO:0000305" key="8"/>
<evidence type="ECO:0007744" key="9">
    <source>
    </source>
</evidence>
<feature type="initiator methionine" description="Removed" evidence="9">
    <location>
        <position position="1"/>
    </location>
</feature>
<feature type="chain" id="PRO_0000422761" description="Copper transport protein CCH">
    <location>
        <begin position="2"/>
        <end position="121"/>
    </location>
</feature>
<feature type="domain" description="HMA" evidence="2">
    <location>
        <begin position="2"/>
        <end position="65"/>
    </location>
</feature>
<feature type="region of interest" description="Disordered" evidence="3">
    <location>
        <begin position="70"/>
        <end position="121"/>
    </location>
</feature>
<feature type="compositionally biased region" description="Basic and acidic residues" evidence="3">
    <location>
        <begin position="73"/>
        <end position="121"/>
    </location>
</feature>
<feature type="binding site" evidence="2">
    <location>
        <position position="13"/>
    </location>
    <ligand>
        <name>Cu cation</name>
        <dbReference type="ChEBI" id="CHEBI:23378"/>
    </ligand>
</feature>
<feature type="binding site" evidence="2">
    <location>
        <position position="16"/>
    </location>
    <ligand>
        <name>Cu cation</name>
        <dbReference type="ChEBI" id="CHEBI:23378"/>
    </ligand>
</feature>
<feature type="modified residue" description="N-acetylalanine" evidence="9">
    <location>
        <position position="2"/>
    </location>
</feature>
<keyword id="KW-0007">Acetylation</keyword>
<keyword id="KW-0143">Chaperone</keyword>
<keyword id="KW-0186">Copper</keyword>
<keyword id="KW-0187">Copper transport</keyword>
<keyword id="KW-0406">Ion transport</keyword>
<keyword id="KW-0479">Metal-binding</keyword>
<keyword id="KW-1185">Reference proteome</keyword>
<keyword id="KW-0813">Transport</keyword>